<proteinExistence type="evidence at protein level"/>
<sequence length="1299" mass="148608">MSDTEENPLEESRESGEMEEEKEEKKEEEEEEEEGEKEKEEEEEEEKGKEEEKEEEKEEGKEEEKKEEEEEKGKKEEEEEEEEEGKGKEEEKEEEKEEEEKEEEKEKEEEEEEEGKGKEEEEEGKEEEEEEKEEEEKEEEKEEEEEEEEEKEEYNPSFEEDALQQSLTEGSLSWEESQEDGEGLEEWVEKEEQREGEEVRGEEESEVRGREEEEGWEEEKSGEEEKSEESERSKERGGEEEGQEKEEAEHEGEREEGREEEEKEKSVEREEEEEEEDTETTETKAGRAKEEKKEKQNKTALVDNIVISHEPPRSSSSLADSPEVSQIYKDNSMKVDDTEEASQKPEDILAQGKDEARLSLEERRKLFQSKGLSAEESLVSVSTEDTLFQKEEDSKVYPLSMTWSFGWNSSLPVYYMREDRRVILYTCAHTAIMYDVVRNTQYHLQGHPNIISCLCVSEDRRWIATADEGPDCLIIIWDSFTGIPVHTIFDSCPEGNGMRSIAITRDSKFLATISDSATQKVCIWKWTLAVETPACTLELPKEYGFQDNLVFNPANNKELVSNSKTQAIYYCWFEDKGILAHSAPVLTEKTFNKLVGKFSQSVFHLKLPQVLSATKEGKLVVWDIHYPSSTSSSAISAFPFIKPRKLVHLQKEAITVLMTIDSYIVTGDIKGNIKFYDHTLSVVNWYSNFKLGAIRTLSFSKTIPSLPTEKSNLPTDCTLRGDLFVVRNFIIGTFDATVYHMTVDGTKLEKLFVEPRDAVYAVSCHPYQPLIAVGSVCGMIKVWDFEKKVYLFSRTFEKGLGVQCLTYNPEGALLGAGFTEGTVYILDAMSLENESPEPFKYSKSSVSHCCFSHDSNYMATADVNFTVAVYMVVVKNGQRVWEYLARLRSHQNSIQSLLFGVHLDSNEPRLLSLGKDRFLIEYNLVKSCKDHLDVLDVHRTDQGNYPTCMIWYPPLTKELFLLICNSGYKVKLFNATTKMCRKTLLGPAYGSPIEHAQVLPVKSTLELQKRYLVFINKDKVGLQILPVDGNPHKTCAIVCHPNGVAGMALSYDGRFAFTAGGQDRSVVQWKINLGALEAAVSLGGEDLTPFYGLVSGGREGKFYRELEDYFYYSQIRSQGIDTMETRQVSEHICLSELPFVMRAIGFYPSEEKIEDMFNEIKFSEYVETGKLIDKINLPDFLKVYLNHRPPFGNTMDGIQNSFNVLGYTNSEGKKAIRREDFLNLLLTKGEHMTEEEMIDCFSTLFGLTPEGWKSEPAATCINGPEICLQKELPEEITAEIFTTEILGLTLSDSSEQLIQ</sequence>
<comment type="function">
    <text evidence="1 2 3">Involved in spermatozoa motility (By similarity). May also regulate cilium motility through its role in the assembly of the axonemal radial spokes (By similarity).</text>
</comment>
<comment type="subcellular location">
    <subcellularLocation>
        <location evidence="1">Cytoplasm</location>
        <location evidence="1">Cytoskeleton</location>
        <location evidence="1">Cilium axoneme</location>
    </subcellularLocation>
    <subcellularLocation>
        <location evidence="3">Cell projection</location>
        <location evidence="3">Cilium</location>
        <location evidence="3">Flagellum</location>
    </subcellularLocation>
</comment>
<comment type="sequence caution" evidence="6">
    <conflict type="erroneous initiation">
        <sequence resource="EMBL-CDS" id="BAB30526"/>
    </conflict>
    <text>Extended N-terminus.</text>
</comment>
<comment type="sequence caution" evidence="6">
    <conflict type="erroneous initiation">
        <sequence resource="EMBL-CDS" id="BAC26877"/>
    </conflict>
    <text>Truncated N-terminus.</text>
</comment>
<gene>
    <name evidence="3" type="primary">Cfap251</name>
    <name evidence="7" type="synonym">Wdr66</name>
</gene>
<organism>
    <name type="scientific">Mus musculus</name>
    <name type="common">Mouse</name>
    <dbReference type="NCBI Taxonomy" id="10090"/>
    <lineage>
        <taxon>Eukaryota</taxon>
        <taxon>Metazoa</taxon>
        <taxon>Chordata</taxon>
        <taxon>Craniata</taxon>
        <taxon>Vertebrata</taxon>
        <taxon>Euteleostomi</taxon>
        <taxon>Mammalia</taxon>
        <taxon>Eutheria</taxon>
        <taxon>Euarchontoglires</taxon>
        <taxon>Glires</taxon>
        <taxon>Rodentia</taxon>
        <taxon>Myomorpha</taxon>
        <taxon>Muroidea</taxon>
        <taxon>Muridae</taxon>
        <taxon>Murinae</taxon>
        <taxon>Mus</taxon>
        <taxon>Mus</taxon>
    </lineage>
</organism>
<name>CF251_MOUSE</name>
<accession>E9Q743</accession>
<accession>Q8BMR0</accession>
<accession>Q9D3X6</accession>
<feature type="chain" id="PRO_0000439639" description="Cilia- and flagella-associated protein 251">
    <location>
        <begin position="1"/>
        <end position="1299"/>
    </location>
</feature>
<feature type="repeat" description="WD 1" evidence="4">
    <location>
        <begin position="484"/>
        <end position="526"/>
    </location>
</feature>
<feature type="repeat" description="WD 2" evidence="4">
    <location>
        <begin position="534"/>
        <end position="574"/>
    </location>
</feature>
<feature type="repeat" description="WD 3" evidence="4">
    <location>
        <begin position="585"/>
        <end position="624"/>
    </location>
</feature>
<feature type="repeat" description="WD 4" evidence="4">
    <location>
        <begin position="643"/>
        <end position="678"/>
    </location>
</feature>
<feature type="repeat" description="WD 5" evidence="4">
    <location>
        <begin position="681"/>
        <end position="741"/>
    </location>
</feature>
<feature type="repeat" description="WD 6" evidence="4">
    <location>
        <begin position="745"/>
        <end position="785"/>
    </location>
</feature>
<feature type="repeat" description="WD 7" evidence="4">
    <location>
        <begin position="791"/>
        <end position="828"/>
    </location>
</feature>
<feature type="repeat" description="WD 8" evidence="4">
    <location>
        <begin position="838"/>
        <end position="874"/>
    </location>
</feature>
<feature type="repeat" description="WD 9" evidence="4">
    <location>
        <begin position="881"/>
        <end position="924"/>
    </location>
</feature>
<feature type="repeat" description="WD 10" evidence="4">
    <location>
        <begin position="935"/>
        <end position="975"/>
    </location>
</feature>
<feature type="repeat" description="WD 11" evidence="4">
    <location>
        <begin position="981"/>
        <end position="1027"/>
    </location>
</feature>
<feature type="repeat" description="WD 12" evidence="4">
    <location>
        <begin position="1033"/>
        <end position="1071"/>
    </location>
</feature>
<feature type="repeat" description="WD 13" evidence="4">
    <location>
        <begin position="1109"/>
        <end position="1149"/>
    </location>
</feature>
<feature type="repeat" description="WD 14" evidence="4">
    <location>
        <begin position="1169"/>
        <end position="1209"/>
    </location>
</feature>
<feature type="region of interest" description="Disordered" evidence="5">
    <location>
        <begin position="1"/>
        <end position="351"/>
    </location>
</feature>
<feature type="compositionally biased region" description="Acidic residues" evidence="5">
    <location>
        <begin position="17"/>
        <end position="45"/>
    </location>
</feature>
<feature type="compositionally biased region" description="Acidic residues" evidence="5">
    <location>
        <begin position="91"/>
        <end position="162"/>
    </location>
</feature>
<feature type="compositionally biased region" description="Acidic residues" evidence="5">
    <location>
        <begin position="176"/>
        <end position="189"/>
    </location>
</feature>
<feature type="compositionally biased region" description="Basic and acidic residues" evidence="5">
    <location>
        <begin position="190"/>
        <end position="199"/>
    </location>
</feature>
<feature type="compositionally biased region" description="Acidic residues" evidence="5">
    <location>
        <begin position="212"/>
        <end position="228"/>
    </location>
</feature>
<feature type="compositionally biased region" description="Basic and acidic residues" evidence="5">
    <location>
        <begin position="229"/>
        <end position="257"/>
    </location>
</feature>
<feature type="compositionally biased region" description="Acidic residues" evidence="5">
    <location>
        <begin position="269"/>
        <end position="280"/>
    </location>
</feature>
<feature type="compositionally biased region" description="Basic and acidic residues" evidence="5">
    <location>
        <begin position="281"/>
        <end position="297"/>
    </location>
</feature>
<feature type="compositionally biased region" description="Basic and acidic residues" evidence="5">
    <location>
        <begin position="331"/>
        <end position="351"/>
    </location>
</feature>
<feature type="sequence conflict" description="In Ref. 2; BAC26877." evidence="6" ref="2">
    <original>Y</original>
    <variation>N</variation>
    <location>
        <position position="922"/>
    </location>
</feature>
<feature type="sequence conflict" description="In Ref. 2; BAB30526." evidence="6" ref="2">
    <original>S</original>
    <variation>N</variation>
    <location>
        <position position="1117"/>
    </location>
</feature>
<evidence type="ECO:0000250" key="1">
    <source>
        <dbReference type="UniProtKB" id="A8IRK7"/>
    </source>
</evidence>
<evidence type="ECO:0000250" key="2">
    <source>
        <dbReference type="UniProtKB" id="Q24DE2"/>
    </source>
</evidence>
<evidence type="ECO:0000250" key="3">
    <source>
        <dbReference type="UniProtKB" id="Q8TBY9"/>
    </source>
</evidence>
<evidence type="ECO:0000255" key="4"/>
<evidence type="ECO:0000256" key="5">
    <source>
        <dbReference type="SAM" id="MobiDB-lite"/>
    </source>
</evidence>
<evidence type="ECO:0000305" key="6"/>
<evidence type="ECO:0000312" key="7">
    <source>
        <dbReference type="MGI" id="MGI:1918495"/>
    </source>
</evidence>
<keyword id="KW-0966">Cell projection</keyword>
<keyword id="KW-0969">Cilium</keyword>
<keyword id="KW-0175">Coiled coil</keyword>
<keyword id="KW-0963">Cytoplasm</keyword>
<keyword id="KW-0206">Cytoskeleton</keyword>
<keyword id="KW-0282">Flagellum</keyword>
<keyword id="KW-1185">Reference proteome</keyword>
<keyword id="KW-0677">Repeat</keyword>
<keyword id="KW-0853">WD repeat</keyword>
<reference key="1">
    <citation type="journal article" date="2009" name="PLoS Biol.">
        <title>Lineage-specific biology revealed by a finished genome assembly of the mouse.</title>
        <authorList>
            <person name="Church D.M."/>
            <person name="Goodstadt L."/>
            <person name="Hillier L.W."/>
            <person name="Zody M.C."/>
            <person name="Goldstein S."/>
            <person name="She X."/>
            <person name="Bult C.J."/>
            <person name="Agarwala R."/>
            <person name="Cherry J.L."/>
            <person name="DiCuccio M."/>
            <person name="Hlavina W."/>
            <person name="Kapustin Y."/>
            <person name="Meric P."/>
            <person name="Maglott D."/>
            <person name="Birtle Z."/>
            <person name="Marques A.C."/>
            <person name="Graves T."/>
            <person name="Zhou S."/>
            <person name="Teague B."/>
            <person name="Potamousis K."/>
            <person name="Churas C."/>
            <person name="Place M."/>
            <person name="Herschleb J."/>
            <person name="Runnheim R."/>
            <person name="Forrest D."/>
            <person name="Amos-Landgraf J."/>
            <person name="Schwartz D.C."/>
            <person name="Cheng Z."/>
            <person name="Lindblad-Toh K."/>
            <person name="Eichler E.E."/>
            <person name="Ponting C.P."/>
        </authorList>
    </citation>
    <scope>NUCLEOTIDE SEQUENCE [LARGE SCALE GENOMIC DNA]</scope>
    <source>
        <strain>C57BL/6J</strain>
    </source>
</reference>
<reference key="2">
    <citation type="journal article" date="2005" name="Science">
        <title>The transcriptional landscape of the mammalian genome.</title>
        <authorList>
            <person name="Carninci P."/>
            <person name="Kasukawa T."/>
            <person name="Katayama S."/>
            <person name="Gough J."/>
            <person name="Frith M.C."/>
            <person name="Maeda N."/>
            <person name="Oyama R."/>
            <person name="Ravasi T."/>
            <person name="Lenhard B."/>
            <person name="Wells C."/>
            <person name="Kodzius R."/>
            <person name="Shimokawa K."/>
            <person name="Bajic V.B."/>
            <person name="Brenner S.E."/>
            <person name="Batalov S."/>
            <person name="Forrest A.R."/>
            <person name="Zavolan M."/>
            <person name="Davis M.J."/>
            <person name="Wilming L.G."/>
            <person name="Aidinis V."/>
            <person name="Allen J.E."/>
            <person name="Ambesi-Impiombato A."/>
            <person name="Apweiler R."/>
            <person name="Aturaliya R.N."/>
            <person name="Bailey T.L."/>
            <person name="Bansal M."/>
            <person name="Baxter L."/>
            <person name="Beisel K.W."/>
            <person name="Bersano T."/>
            <person name="Bono H."/>
            <person name="Chalk A.M."/>
            <person name="Chiu K.P."/>
            <person name="Choudhary V."/>
            <person name="Christoffels A."/>
            <person name="Clutterbuck D.R."/>
            <person name="Crowe M.L."/>
            <person name="Dalla E."/>
            <person name="Dalrymple B.P."/>
            <person name="de Bono B."/>
            <person name="Della Gatta G."/>
            <person name="di Bernardo D."/>
            <person name="Down T."/>
            <person name="Engstrom P."/>
            <person name="Fagiolini M."/>
            <person name="Faulkner G."/>
            <person name="Fletcher C.F."/>
            <person name="Fukushima T."/>
            <person name="Furuno M."/>
            <person name="Futaki S."/>
            <person name="Gariboldi M."/>
            <person name="Georgii-Hemming P."/>
            <person name="Gingeras T.R."/>
            <person name="Gojobori T."/>
            <person name="Green R.E."/>
            <person name="Gustincich S."/>
            <person name="Harbers M."/>
            <person name="Hayashi Y."/>
            <person name="Hensch T.K."/>
            <person name="Hirokawa N."/>
            <person name="Hill D."/>
            <person name="Huminiecki L."/>
            <person name="Iacono M."/>
            <person name="Ikeo K."/>
            <person name="Iwama A."/>
            <person name="Ishikawa T."/>
            <person name="Jakt M."/>
            <person name="Kanapin A."/>
            <person name="Katoh M."/>
            <person name="Kawasawa Y."/>
            <person name="Kelso J."/>
            <person name="Kitamura H."/>
            <person name="Kitano H."/>
            <person name="Kollias G."/>
            <person name="Krishnan S.P."/>
            <person name="Kruger A."/>
            <person name="Kummerfeld S.K."/>
            <person name="Kurochkin I.V."/>
            <person name="Lareau L.F."/>
            <person name="Lazarevic D."/>
            <person name="Lipovich L."/>
            <person name="Liu J."/>
            <person name="Liuni S."/>
            <person name="McWilliam S."/>
            <person name="Madan Babu M."/>
            <person name="Madera M."/>
            <person name="Marchionni L."/>
            <person name="Matsuda H."/>
            <person name="Matsuzawa S."/>
            <person name="Miki H."/>
            <person name="Mignone F."/>
            <person name="Miyake S."/>
            <person name="Morris K."/>
            <person name="Mottagui-Tabar S."/>
            <person name="Mulder N."/>
            <person name="Nakano N."/>
            <person name="Nakauchi H."/>
            <person name="Ng P."/>
            <person name="Nilsson R."/>
            <person name="Nishiguchi S."/>
            <person name="Nishikawa S."/>
            <person name="Nori F."/>
            <person name="Ohara O."/>
            <person name="Okazaki Y."/>
            <person name="Orlando V."/>
            <person name="Pang K.C."/>
            <person name="Pavan W.J."/>
            <person name="Pavesi G."/>
            <person name="Pesole G."/>
            <person name="Petrovsky N."/>
            <person name="Piazza S."/>
            <person name="Reed J."/>
            <person name="Reid J.F."/>
            <person name="Ring B.Z."/>
            <person name="Ringwald M."/>
            <person name="Rost B."/>
            <person name="Ruan Y."/>
            <person name="Salzberg S.L."/>
            <person name="Sandelin A."/>
            <person name="Schneider C."/>
            <person name="Schoenbach C."/>
            <person name="Sekiguchi K."/>
            <person name="Semple C.A."/>
            <person name="Seno S."/>
            <person name="Sessa L."/>
            <person name="Sheng Y."/>
            <person name="Shibata Y."/>
            <person name="Shimada H."/>
            <person name="Shimada K."/>
            <person name="Silva D."/>
            <person name="Sinclair B."/>
            <person name="Sperling S."/>
            <person name="Stupka E."/>
            <person name="Sugiura K."/>
            <person name="Sultana R."/>
            <person name="Takenaka Y."/>
            <person name="Taki K."/>
            <person name="Tammoja K."/>
            <person name="Tan S.L."/>
            <person name="Tang S."/>
            <person name="Taylor M.S."/>
            <person name="Tegner J."/>
            <person name="Teichmann S.A."/>
            <person name="Ueda H.R."/>
            <person name="van Nimwegen E."/>
            <person name="Verardo R."/>
            <person name="Wei C.L."/>
            <person name="Yagi K."/>
            <person name="Yamanishi H."/>
            <person name="Zabarovsky E."/>
            <person name="Zhu S."/>
            <person name="Zimmer A."/>
            <person name="Hide W."/>
            <person name="Bult C."/>
            <person name="Grimmond S.M."/>
            <person name="Teasdale R.D."/>
            <person name="Liu E.T."/>
            <person name="Brusic V."/>
            <person name="Quackenbush J."/>
            <person name="Wahlestedt C."/>
            <person name="Mattick J.S."/>
            <person name="Hume D.A."/>
            <person name="Kai C."/>
            <person name="Sasaki D."/>
            <person name="Tomaru Y."/>
            <person name="Fukuda S."/>
            <person name="Kanamori-Katayama M."/>
            <person name="Suzuki M."/>
            <person name="Aoki J."/>
            <person name="Arakawa T."/>
            <person name="Iida J."/>
            <person name="Imamura K."/>
            <person name="Itoh M."/>
            <person name="Kato T."/>
            <person name="Kawaji H."/>
            <person name="Kawagashira N."/>
            <person name="Kawashima T."/>
            <person name="Kojima M."/>
            <person name="Kondo S."/>
            <person name="Konno H."/>
            <person name="Nakano K."/>
            <person name="Ninomiya N."/>
            <person name="Nishio T."/>
            <person name="Okada M."/>
            <person name="Plessy C."/>
            <person name="Shibata K."/>
            <person name="Shiraki T."/>
            <person name="Suzuki S."/>
            <person name="Tagami M."/>
            <person name="Waki K."/>
            <person name="Watahiki A."/>
            <person name="Okamura-Oho Y."/>
            <person name="Suzuki H."/>
            <person name="Kawai J."/>
            <person name="Hayashizaki Y."/>
        </authorList>
    </citation>
    <scope>NUCLEOTIDE SEQUENCE [LARGE SCALE MRNA] OF 483-1299</scope>
    <source>
        <strain>C57BL/6J</strain>
    </source>
</reference>
<reference key="3">
    <citation type="journal article" date="2010" name="Cell">
        <title>A tissue-specific atlas of mouse protein phosphorylation and expression.</title>
        <authorList>
            <person name="Huttlin E.L."/>
            <person name="Jedrychowski M.P."/>
            <person name="Elias J.E."/>
            <person name="Goswami T."/>
            <person name="Rad R."/>
            <person name="Beausoleil S.A."/>
            <person name="Villen J."/>
            <person name="Haas W."/>
            <person name="Sowa M.E."/>
            <person name="Gygi S.P."/>
        </authorList>
    </citation>
    <scope>IDENTIFICATION BY MASS SPECTROMETRY [LARGE SCALE ANALYSIS]</scope>
    <source>
        <tissue>Testis</tissue>
    </source>
</reference>
<dbReference type="EMBL" id="AC113504">
    <property type="status" value="NOT_ANNOTATED_CDS"/>
    <property type="molecule type" value="Genomic_DNA"/>
</dbReference>
<dbReference type="EMBL" id="AC163337">
    <property type="status" value="NOT_ANNOTATED_CDS"/>
    <property type="molecule type" value="Genomic_DNA"/>
</dbReference>
<dbReference type="EMBL" id="AK030281">
    <property type="protein sequence ID" value="BAC26877.1"/>
    <property type="status" value="ALT_INIT"/>
    <property type="molecule type" value="mRNA"/>
</dbReference>
<dbReference type="EMBL" id="AK016965">
    <property type="protein sequence ID" value="BAB30526.1"/>
    <property type="status" value="ALT_INIT"/>
    <property type="molecule type" value="mRNA"/>
</dbReference>
<dbReference type="CCDS" id="CCDS89985.1"/>
<dbReference type="RefSeq" id="NP_001357769.1">
    <property type="nucleotide sequence ID" value="NM_001370840.1"/>
</dbReference>
<dbReference type="RefSeq" id="XP_030110402.1">
    <property type="nucleotide sequence ID" value="XM_030254542.2"/>
</dbReference>
<dbReference type="SMR" id="E9Q743"/>
<dbReference type="FunCoup" id="E9Q743">
    <property type="interactions" value="222"/>
</dbReference>
<dbReference type="STRING" id="10090.ENSMUSP00000113309"/>
<dbReference type="GlyGen" id="E9Q743">
    <property type="glycosylation" value="4 sites, 1 N-linked glycan (1 site), 1 O-linked glycan (3 sites)"/>
</dbReference>
<dbReference type="iPTMnet" id="E9Q743"/>
<dbReference type="PhosphoSitePlus" id="E9Q743"/>
<dbReference type="SwissPalm" id="E9Q743"/>
<dbReference type="PaxDb" id="10090-ENSMUSP00000113309"/>
<dbReference type="ProteomicsDB" id="281202"/>
<dbReference type="Antibodypedia" id="31607">
    <property type="antibodies" value="97 antibodies from 18 providers"/>
</dbReference>
<dbReference type="Ensembl" id="ENSMUST00000121964.8">
    <property type="protein sequence ID" value="ENSMUSP00000113309.2"/>
    <property type="gene ID" value="ENSMUSG00000029442.20"/>
</dbReference>
<dbReference type="GeneID" id="269701"/>
<dbReference type="AGR" id="MGI:1918495"/>
<dbReference type="MGI" id="MGI:1918495">
    <property type="gene designation" value="Cfap251"/>
</dbReference>
<dbReference type="VEuPathDB" id="HostDB:ENSMUSG00000029442"/>
<dbReference type="eggNOG" id="ENOG502QQ05">
    <property type="taxonomic scope" value="Eukaryota"/>
</dbReference>
<dbReference type="GeneTree" id="ENSGT00390000013370"/>
<dbReference type="HOGENOM" id="CLU_007087_0_0_1"/>
<dbReference type="InParanoid" id="E9Q743"/>
<dbReference type="OMA" id="YYAQIRA"/>
<dbReference type="PhylomeDB" id="E9Q743"/>
<dbReference type="TreeFam" id="TF328993"/>
<dbReference type="ChiTaRS" id="Wdr66">
    <property type="organism name" value="mouse"/>
</dbReference>
<dbReference type="PRO" id="PR:E9Q743"/>
<dbReference type="Proteomes" id="UP000000589">
    <property type="component" value="Chromosome 5"/>
</dbReference>
<dbReference type="RNAct" id="E9Q743">
    <property type="molecule type" value="protein"/>
</dbReference>
<dbReference type="Bgee" id="ENSMUSG00000029442">
    <property type="expression patterns" value="Expressed in outer nuclear layer of retina and 104 other cell types or tissues"/>
</dbReference>
<dbReference type="ExpressionAtlas" id="E9Q743">
    <property type="expression patterns" value="baseline and differential"/>
</dbReference>
<dbReference type="GO" id="GO:0005737">
    <property type="term" value="C:cytoplasm"/>
    <property type="evidence" value="ECO:0007669"/>
    <property type="project" value="UniProtKB-KW"/>
</dbReference>
<dbReference type="GO" id="GO:0005856">
    <property type="term" value="C:cytoskeleton"/>
    <property type="evidence" value="ECO:0007669"/>
    <property type="project" value="UniProtKB-KW"/>
</dbReference>
<dbReference type="GO" id="GO:0036126">
    <property type="term" value="C:sperm flagellum"/>
    <property type="evidence" value="ECO:0000250"/>
    <property type="project" value="UniProtKB"/>
</dbReference>
<dbReference type="GO" id="GO:0030317">
    <property type="term" value="P:flagellated sperm motility"/>
    <property type="evidence" value="ECO:0000250"/>
    <property type="project" value="UniProtKB"/>
</dbReference>
<dbReference type="FunFam" id="1.10.238.10:FF:000245">
    <property type="entry name" value="WD repeat domain 66"/>
    <property type="match status" value="1"/>
</dbReference>
<dbReference type="FunFam" id="2.130.10.10:FF:000427">
    <property type="entry name" value="WD repeat domain 66"/>
    <property type="match status" value="1"/>
</dbReference>
<dbReference type="Gene3D" id="2.130.10.10">
    <property type="entry name" value="YVTN repeat-like/Quinoprotein amine dehydrogenase"/>
    <property type="match status" value="2"/>
</dbReference>
<dbReference type="InterPro" id="IPR011992">
    <property type="entry name" value="EF-hand-dom_pair"/>
</dbReference>
<dbReference type="InterPro" id="IPR011047">
    <property type="entry name" value="Quinoprotein_ADH-like_sf"/>
</dbReference>
<dbReference type="InterPro" id="IPR015943">
    <property type="entry name" value="WD40/YVTN_repeat-like_dom_sf"/>
</dbReference>
<dbReference type="InterPro" id="IPR036322">
    <property type="entry name" value="WD40_repeat_dom_sf"/>
</dbReference>
<dbReference type="InterPro" id="IPR001680">
    <property type="entry name" value="WD40_rpt"/>
</dbReference>
<dbReference type="InterPro" id="IPR050630">
    <property type="entry name" value="WD_repeat_EMAP"/>
</dbReference>
<dbReference type="PANTHER" id="PTHR13720:SF13">
    <property type="entry name" value="CILIA- AND FLAGELLA-ASSOCIATED PROTEIN 251"/>
    <property type="match status" value="1"/>
</dbReference>
<dbReference type="PANTHER" id="PTHR13720">
    <property type="entry name" value="WD-40 REPEAT PROTEIN"/>
    <property type="match status" value="1"/>
</dbReference>
<dbReference type="Pfam" id="PF00400">
    <property type="entry name" value="WD40"/>
    <property type="match status" value="3"/>
</dbReference>
<dbReference type="SMART" id="SM00320">
    <property type="entry name" value="WD40"/>
    <property type="match status" value="8"/>
</dbReference>
<dbReference type="SUPFAM" id="SSF47473">
    <property type="entry name" value="EF-hand"/>
    <property type="match status" value="1"/>
</dbReference>
<dbReference type="SUPFAM" id="SSF50998">
    <property type="entry name" value="Quinoprotein alcohol dehydrogenase-like"/>
    <property type="match status" value="1"/>
</dbReference>
<dbReference type="SUPFAM" id="SSF50978">
    <property type="entry name" value="WD40 repeat-like"/>
    <property type="match status" value="1"/>
</dbReference>
<dbReference type="PROSITE" id="PS50294">
    <property type="entry name" value="WD_REPEATS_REGION"/>
    <property type="match status" value="1"/>
</dbReference>
<protein>
    <recommendedName>
        <fullName evidence="6">Cilia- and flagella-associated protein 251</fullName>
    </recommendedName>
    <alternativeName>
        <fullName evidence="7">WD repeat-containing protein 66</fullName>
    </alternativeName>
</protein>